<organism>
    <name type="scientific">Pelodictyon phaeoclathratiforme (strain DSM 5477 / BU-1)</name>
    <dbReference type="NCBI Taxonomy" id="324925"/>
    <lineage>
        <taxon>Bacteria</taxon>
        <taxon>Pseudomonadati</taxon>
        <taxon>Chlorobiota</taxon>
        <taxon>Chlorobiia</taxon>
        <taxon>Chlorobiales</taxon>
        <taxon>Chlorobiaceae</taxon>
        <taxon>Chlorobium/Pelodictyon group</taxon>
        <taxon>Pelodictyon</taxon>
    </lineage>
</organism>
<protein>
    <recommendedName>
        <fullName evidence="1">Light-independent protochlorophyllide reductase subunit B</fullName>
        <shortName evidence="1">DPOR subunit B</shortName>
        <shortName evidence="1">LI-POR subunit B</shortName>
        <ecNumber evidence="1">1.3.7.7</ecNumber>
    </recommendedName>
</protein>
<dbReference type="EC" id="1.3.7.7" evidence="1"/>
<dbReference type="EMBL" id="CP001110">
    <property type="protein sequence ID" value="ACF42658.1"/>
    <property type="molecule type" value="Genomic_DNA"/>
</dbReference>
<dbReference type="RefSeq" id="WP_012507153.1">
    <property type="nucleotide sequence ID" value="NC_011060.1"/>
</dbReference>
<dbReference type="SMR" id="B4SC78"/>
<dbReference type="STRING" id="324925.Ppha_0325"/>
<dbReference type="KEGG" id="pph:Ppha_0325"/>
<dbReference type="eggNOG" id="COG2710">
    <property type="taxonomic scope" value="Bacteria"/>
</dbReference>
<dbReference type="HOGENOM" id="CLU_025470_0_0_10"/>
<dbReference type="OrthoDB" id="5717231at2"/>
<dbReference type="UniPathway" id="UPA00671"/>
<dbReference type="Proteomes" id="UP000002724">
    <property type="component" value="Chromosome"/>
</dbReference>
<dbReference type="GO" id="GO:0051539">
    <property type="term" value="F:4 iron, 4 sulfur cluster binding"/>
    <property type="evidence" value="ECO:0007669"/>
    <property type="project" value="UniProtKB-UniRule"/>
</dbReference>
<dbReference type="GO" id="GO:0005524">
    <property type="term" value="F:ATP binding"/>
    <property type="evidence" value="ECO:0007669"/>
    <property type="project" value="UniProtKB-UniRule"/>
</dbReference>
<dbReference type="GO" id="GO:0046872">
    <property type="term" value="F:metal ion binding"/>
    <property type="evidence" value="ECO:0007669"/>
    <property type="project" value="UniProtKB-KW"/>
</dbReference>
<dbReference type="GO" id="GO:0016730">
    <property type="term" value="F:oxidoreductase activity, acting on iron-sulfur proteins as donors"/>
    <property type="evidence" value="ECO:0007669"/>
    <property type="project" value="InterPro"/>
</dbReference>
<dbReference type="GO" id="GO:0016636">
    <property type="term" value="F:oxidoreductase activity, acting on the CH-CH group of donors, iron-sulfur protein as acceptor"/>
    <property type="evidence" value="ECO:0007669"/>
    <property type="project" value="UniProtKB-UniRule"/>
</dbReference>
<dbReference type="GO" id="GO:0036070">
    <property type="term" value="P:light-independent bacteriochlorophyll biosynthetic process"/>
    <property type="evidence" value="ECO:0007669"/>
    <property type="project" value="UniProtKB-UniRule"/>
</dbReference>
<dbReference type="GO" id="GO:0019685">
    <property type="term" value="P:photosynthesis, dark reaction"/>
    <property type="evidence" value="ECO:0007669"/>
    <property type="project" value="InterPro"/>
</dbReference>
<dbReference type="Gene3D" id="1.20.89.20">
    <property type="match status" value="1"/>
</dbReference>
<dbReference type="Gene3D" id="3.40.50.1980">
    <property type="entry name" value="Nitrogenase molybdenum iron protein domain"/>
    <property type="match status" value="3"/>
</dbReference>
<dbReference type="Gene3D" id="1.10.8.550">
    <property type="entry name" value="Proto-chlorophyllide reductase 57 kD subunit B"/>
    <property type="match status" value="1"/>
</dbReference>
<dbReference type="HAMAP" id="MF_00353">
    <property type="entry name" value="ChlB_BchB"/>
    <property type="match status" value="1"/>
</dbReference>
<dbReference type="InterPro" id="IPR050152">
    <property type="entry name" value="ChlB/BchB/BchZ"/>
</dbReference>
<dbReference type="InterPro" id="IPR013580">
    <property type="entry name" value="LI-POR_suB-like_C"/>
</dbReference>
<dbReference type="InterPro" id="IPR000510">
    <property type="entry name" value="Nase/OxRdtase_comp1"/>
</dbReference>
<dbReference type="InterPro" id="IPR042298">
    <property type="entry name" value="P-CP_red_C"/>
</dbReference>
<dbReference type="InterPro" id="IPR005969">
    <property type="entry name" value="Protochl_reductB"/>
</dbReference>
<dbReference type="InterPro" id="IPR016209">
    <property type="entry name" value="Protochlorophyllide_Rdtase"/>
</dbReference>
<dbReference type="NCBIfam" id="TIGR01278">
    <property type="entry name" value="DPOR_BchB"/>
    <property type="match status" value="1"/>
</dbReference>
<dbReference type="NCBIfam" id="NF002789">
    <property type="entry name" value="PRK02910.1-3"/>
    <property type="match status" value="1"/>
</dbReference>
<dbReference type="PANTHER" id="PTHR33712">
    <property type="entry name" value="LIGHT-INDEPENDENT PROTOCHLOROPHYLLIDE REDUCTASE SUBUNIT B"/>
    <property type="match status" value="1"/>
</dbReference>
<dbReference type="PANTHER" id="PTHR33712:SF7">
    <property type="entry name" value="LIGHT-INDEPENDENT PROTOCHLOROPHYLLIDE REDUCTASE SUBUNIT B"/>
    <property type="match status" value="1"/>
</dbReference>
<dbReference type="Pfam" id="PF00148">
    <property type="entry name" value="Oxidored_nitro"/>
    <property type="match status" value="1"/>
</dbReference>
<dbReference type="Pfam" id="PF08369">
    <property type="entry name" value="PCP_red"/>
    <property type="match status" value="1"/>
</dbReference>
<dbReference type="PIRSF" id="PIRSF000163">
    <property type="entry name" value="PCP_ChlB"/>
    <property type="match status" value="1"/>
</dbReference>
<dbReference type="SUPFAM" id="SSF53807">
    <property type="entry name" value="Helical backbone' metal receptor"/>
    <property type="match status" value="1"/>
</dbReference>
<comment type="function">
    <text evidence="1">Component of the dark-operative protochlorophyllide reductase (DPOR) that uses Mg-ATP and reduced ferredoxin to reduce ring D of protochlorophyllide (Pchlide) to form chlorophyllide a (Chlide). This reaction is light-independent. The NB-protein (BchN-BchB) is the catalytic component of the complex.</text>
</comment>
<comment type="catalytic activity">
    <reaction evidence="1">
        <text>chlorophyllide a + oxidized 2[4Fe-4S]-[ferredoxin] + 2 ADP + 2 phosphate = protochlorophyllide a + reduced 2[4Fe-4S]-[ferredoxin] + 2 ATP + 2 H2O</text>
        <dbReference type="Rhea" id="RHEA:28202"/>
        <dbReference type="Rhea" id="RHEA-COMP:10002"/>
        <dbReference type="Rhea" id="RHEA-COMP:10004"/>
        <dbReference type="ChEBI" id="CHEBI:15377"/>
        <dbReference type="ChEBI" id="CHEBI:30616"/>
        <dbReference type="ChEBI" id="CHEBI:33722"/>
        <dbReference type="ChEBI" id="CHEBI:33723"/>
        <dbReference type="ChEBI" id="CHEBI:43474"/>
        <dbReference type="ChEBI" id="CHEBI:83348"/>
        <dbReference type="ChEBI" id="CHEBI:83350"/>
        <dbReference type="ChEBI" id="CHEBI:456216"/>
        <dbReference type="EC" id="1.3.7.7"/>
    </reaction>
</comment>
<comment type="cofactor">
    <cofactor evidence="1">
        <name>[4Fe-4S] cluster</name>
        <dbReference type="ChEBI" id="CHEBI:49883"/>
    </cofactor>
    <text evidence="1">Binds 1 [4Fe-4S] cluster per heterodimer. The cluster is bound at the heterodimer interface by residues from both subunits.</text>
</comment>
<comment type="pathway">
    <text evidence="1">Porphyrin-containing compound metabolism; bacteriochlorophyll biosynthesis (light-independent).</text>
</comment>
<comment type="subunit">
    <text evidence="1">Protochlorophyllide reductase is composed of three subunits; BchL, BchN and BchB. Forms a heterotetramer of two BchB and two BchN subunits.</text>
</comment>
<comment type="similarity">
    <text evidence="1">Belongs to the ChlB/BchB/BchZ family.</text>
</comment>
<accession>B4SC78</accession>
<gene>
    <name evidence="1" type="primary">bchB</name>
    <name type="ordered locus">Ppha_0325</name>
</gene>
<name>BCHB_PELPB</name>
<keyword id="KW-0004">4Fe-4S</keyword>
<keyword id="KW-0067">ATP-binding</keyword>
<keyword id="KW-0077">Bacteriochlorophyll biosynthesis</keyword>
<keyword id="KW-0149">Chlorophyll biosynthesis</keyword>
<keyword id="KW-0408">Iron</keyword>
<keyword id="KW-0411">Iron-sulfur</keyword>
<keyword id="KW-0479">Metal-binding</keyword>
<keyword id="KW-0547">Nucleotide-binding</keyword>
<keyword id="KW-0560">Oxidoreductase</keyword>
<keyword id="KW-0602">Photosynthesis</keyword>
<keyword id="KW-1185">Reference proteome</keyword>
<evidence type="ECO:0000255" key="1">
    <source>
        <dbReference type="HAMAP-Rule" id="MF_00353"/>
    </source>
</evidence>
<reference key="1">
    <citation type="submission" date="2008-06" db="EMBL/GenBank/DDBJ databases">
        <title>Complete sequence of Pelodictyon phaeoclathratiforme BU-1.</title>
        <authorList>
            <consortium name="US DOE Joint Genome Institute"/>
            <person name="Lucas S."/>
            <person name="Copeland A."/>
            <person name="Lapidus A."/>
            <person name="Glavina del Rio T."/>
            <person name="Dalin E."/>
            <person name="Tice H."/>
            <person name="Bruce D."/>
            <person name="Goodwin L."/>
            <person name="Pitluck S."/>
            <person name="Schmutz J."/>
            <person name="Larimer F."/>
            <person name="Land M."/>
            <person name="Hauser L."/>
            <person name="Kyrpides N."/>
            <person name="Mikhailova N."/>
            <person name="Liu Z."/>
            <person name="Li T."/>
            <person name="Zhao F."/>
            <person name="Overmann J."/>
            <person name="Bryant D.A."/>
            <person name="Richardson P."/>
        </authorList>
    </citation>
    <scope>NUCLEOTIDE SEQUENCE [LARGE SCALE GENOMIC DNA]</scope>
    <source>
        <strain>DSM 5477 / BU-1</strain>
    </source>
</reference>
<sequence>MRLAFWLYEGTALHGISRVTNSMKGVHTVYHAPQGDDYITATYTMLERTPQFPGLSISVVRGRDLAQGVSRLPSTLQQVEHHYHPELIVIAPSCSTALLQEDLHQLAAHSGLPQEKILVYALNPFRVSENEAADGLLTELVKRFASPQEKTAQPSVNLLGFTSLGFHLRANLTSIRRMLQTLGIAVNVVAPWGASIDDLRKLPAAWLNIAPYREIGSTAAEYLADAFAMPALYEAPIGVEPTLAWLRSLIEKLNAAGAERGVAPIVMPQLNAFSLDGLSAPSGVPWFARTADMESFSNKRAFVFGDATHTVALVKFLRDELGMQIIGAGTYLERHADWVRKELEGYLPGALIVTDKFQDVAQIIDDQMPDLVCGTQMERHSCRKLDVPCMVVCPPTHIENHLLGYYPFFGFDGADVIADRVYLSCKLGLEKHLIDFFGDAGLEYEEPEVSAPSEEPVALSVAPNDHPSPEAAAEAVVIAEEGEMKWSDEAETMLKKVPFFVRKKVRKNTETFARASGASMISVDVFRQAKESLGG</sequence>
<proteinExistence type="inferred from homology"/>
<feature type="chain" id="PRO_1000120532" description="Light-independent protochlorophyllide reductase subunit B">
    <location>
        <begin position="1"/>
        <end position="535"/>
    </location>
</feature>
<feature type="active site" description="Proton donor" evidence="1">
    <location>
        <position position="292"/>
    </location>
</feature>
<feature type="binding site" evidence="1">
    <location>
        <position position="36"/>
    </location>
    <ligand>
        <name>[4Fe-4S] cluster</name>
        <dbReference type="ChEBI" id="CHEBI:49883"/>
        <note>ligand shared with heterodimeric partner</note>
    </ligand>
</feature>
<feature type="binding site" evidence="1">
    <location>
        <begin position="428"/>
        <end position="429"/>
    </location>
    <ligand>
        <name>substrate</name>
    </ligand>
</feature>